<evidence type="ECO:0000255" key="1"/>
<evidence type="ECO:0000305" key="2"/>
<accession>O34447</accession>
<comment type="subcellular location">
    <subcellularLocation>
        <location evidence="2">Cell membrane</location>
        <topology evidence="2">Multi-pass membrane protein</topology>
    </subcellularLocation>
</comment>
<comment type="similarity">
    <text evidence="2">Belongs to the TerC family.</text>
</comment>
<proteinExistence type="inferred from homology"/>
<gene>
    <name type="primary">yceF</name>
    <name type="ordered locus">BSU02920</name>
</gene>
<organism>
    <name type="scientific">Bacillus subtilis (strain 168)</name>
    <dbReference type="NCBI Taxonomy" id="224308"/>
    <lineage>
        <taxon>Bacteria</taxon>
        <taxon>Bacillati</taxon>
        <taxon>Bacillota</taxon>
        <taxon>Bacilli</taxon>
        <taxon>Bacillales</taxon>
        <taxon>Bacillaceae</taxon>
        <taxon>Bacillus</taxon>
    </lineage>
</organism>
<protein>
    <recommendedName>
        <fullName>Uncharacterized membrane protein YceF</fullName>
    </recommendedName>
</protein>
<sequence>MDFLHHILSTYASFFDWKMWGEVLTDPVSWGLIGSLVVLEGLLSADNALVLAVMVKHLPEKQRKKALTYGLFGAYIFRFIFIGLGMLLIKFWWIKVLGALYLAWLVIKHFWIGEKEEEADGMKKNSWMVRTFGIFWATVISVELMDLAFSVDSILAAFAVSEKVWVLLIGGMLGILMMRTVAKVFLVLIDKIPELENTAFVLIGIIALKMAGSAFHYEMPHSVFFIIIIAAFAVTLIIHYINKQKQVREQTAASKEE</sequence>
<dbReference type="EMBL" id="AB000617">
    <property type="protein sequence ID" value="BAA22253.1"/>
    <property type="molecule type" value="Genomic_DNA"/>
</dbReference>
<dbReference type="EMBL" id="AL009126">
    <property type="protein sequence ID" value="CAB12086.1"/>
    <property type="molecule type" value="Genomic_DNA"/>
</dbReference>
<dbReference type="PIR" id="H69756">
    <property type="entry name" value="H69756"/>
</dbReference>
<dbReference type="RefSeq" id="NP_388174.1">
    <property type="nucleotide sequence ID" value="NC_000964.3"/>
</dbReference>
<dbReference type="RefSeq" id="WP_003246458.1">
    <property type="nucleotide sequence ID" value="NZ_OZ025638.1"/>
</dbReference>
<dbReference type="FunCoup" id="O34447">
    <property type="interactions" value="274"/>
</dbReference>
<dbReference type="STRING" id="224308.BSU02920"/>
<dbReference type="PaxDb" id="224308-BSU02920"/>
<dbReference type="EnsemblBacteria" id="CAB12086">
    <property type="protein sequence ID" value="CAB12086"/>
    <property type="gene ID" value="BSU_02920"/>
</dbReference>
<dbReference type="GeneID" id="938369"/>
<dbReference type="KEGG" id="bsu:BSU02920"/>
<dbReference type="PATRIC" id="fig|224308.179.peg.304"/>
<dbReference type="eggNOG" id="COG0861">
    <property type="taxonomic scope" value="Bacteria"/>
</dbReference>
<dbReference type="InParanoid" id="O34447"/>
<dbReference type="OrthoDB" id="9806211at2"/>
<dbReference type="PhylomeDB" id="O34447"/>
<dbReference type="BioCyc" id="BSUB:BSU02920-MONOMER"/>
<dbReference type="Proteomes" id="UP000001570">
    <property type="component" value="Chromosome"/>
</dbReference>
<dbReference type="GO" id="GO:0005886">
    <property type="term" value="C:plasma membrane"/>
    <property type="evidence" value="ECO:0007669"/>
    <property type="project" value="UniProtKB-SubCell"/>
</dbReference>
<dbReference type="InterPro" id="IPR022493">
    <property type="entry name" value="CHP03716_TM_YkoY"/>
</dbReference>
<dbReference type="InterPro" id="IPR005496">
    <property type="entry name" value="Integral_membrane_TerC"/>
</dbReference>
<dbReference type="NCBIfam" id="TIGR03716">
    <property type="entry name" value="R_switched_YkoY"/>
    <property type="match status" value="1"/>
</dbReference>
<dbReference type="PANTHER" id="PTHR30238">
    <property type="entry name" value="MEMBRANE BOUND PREDICTED REDOX MODULATOR"/>
    <property type="match status" value="1"/>
</dbReference>
<dbReference type="PANTHER" id="PTHR30238:SF6">
    <property type="entry name" value="TERC-LIKE PROTEIN"/>
    <property type="match status" value="1"/>
</dbReference>
<dbReference type="Pfam" id="PF03741">
    <property type="entry name" value="TerC"/>
    <property type="match status" value="1"/>
</dbReference>
<name>YCEF_BACSU</name>
<reference key="1">
    <citation type="journal article" date="1997" name="Microbiology">
        <title>A 32 kb nucleotide sequence from the region of the lincomycin-resistance gene (22 degrees-25 degrees) of the Bacillus subtilis chromosome and identification of the site of the lin-2 mutation.</title>
        <authorList>
            <person name="Kumano M."/>
            <person name="Tamakoshi A."/>
            <person name="Yamane K."/>
        </authorList>
    </citation>
    <scope>NUCLEOTIDE SEQUENCE [GENOMIC DNA]</scope>
    <source>
        <strain>168</strain>
    </source>
</reference>
<reference key="2">
    <citation type="journal article" date="1997" name="Nature">
        <title>The complete genome sequence of the Gram-positive bacterium Bacillus subtilis.</title>
        <authorList>
            <person name="Kunst F."/>
            <person name="Ogasawara N."/>
            <person name="Moszer I."/>
            <person name="Albertini A.M."/>
            <person name="Alloni G."/>
            <person name="Azevedo V."/>
            <person name="Bertero M.G."/>
            <person name="Bessieres P."/>
            <person name="Bolotin A."/>
            <person name="Borchert S."/>
            <person name="Borriss R."/>
            <person name="Boursier L."/>
            <person name="Brans A."/>
            <person name="Braun M."/>
            <person name="Brignell S.C."/>
            <person name="Bron S."/>
            <person name="Brouillet S."/>
            <person name="Bruschi C.V."/>
            <person name="Caldwell B."/>
            <person name="Capuano V."/>
            <person name="Carter N.M."/>
            <person name="Choi S.-K."/>
            <person name="Codani J.-J."/>
            <person name="Connerton I.F."/>
            <person name="Cummings N.J."/>
            <person name="Daniel R.A."/>
            <person name="Denizot F."/>
            <person name="Devine K.M."/>
            <person name="Duesterhoeft A."/>
            <person name="Ehrlich S.D."/>
            <person name="Emmerson P.T."/>
            <person name="Entian K.-D."/>
            <person name="Errington J."/>
            <person name="Fabret C."/>
            <person name="Ferrari E."/>
            <person name="Foulger D."/>
            <person name="Fritz C."/>
            <person name="Fujita M."/>
            <person name="Fujita Y."/>
            <person name="Fuma S."/>
            <person name="Galizzi A."/>
            <person name="Galleron N."/>
            <person name="Ghim S.-Y."/>
            <person name="Glaser P."/>
            <person name="Goffeau A."/>
            <person name="Golightly E.J."/>
            <person name="Grandi G."/>
            <person name="Guiseppi G."/>
            <person name="Guy B.J."/>
            <person name="Haga K."/>
            <person name="Haiech J."/>
            <person name="Harwood C.R."/>
            <person name="Henaut A."/>
            <person name="Hilbert H."/>
            <person name="Holsappel S."/>
            <person name="Hosono S."/>
            <person name="Hullo M.-F."/>
            <person name="Itaya M."/>
            <person name="Jones L.-M."/>
            <person name="Joris B."/>
            <person name="Karamata D."/>
            <person name="Kasahara Y."/>
            <person name="Klaerr-Blanchard M."/>
            <person name="Klein C."/>
            <person name="Kobayashi Y."/>
            <person name="Koetter P."/>
            <person name="Koningstein G."/>
            <person name="Krogh S."/>
            <person name="Kumano M."/>
            <person name="Kurita K."/>
            <person name="Lapidus A."/>
            <person name="Lardinois S."/>
            <person name="Lauber J."/>
            <person name="Lazarevic V."/>
            <person name="Lee S.-M."/>
            <person name="Levine A."/>
            <person name="Liu H."/>
            <person name="Masuda S."/>
            <person name="Mauel C."/>
            <person name="Medigue C."/>
            <person name="Medina N."/>
            <person name="Mellado R.P."/>
            <person name="Mizuno M."/>
            <person name="Moestl D."/>
            <person name="Nakai S."/>
            <person name="Noback M."/>
            <person name="Noone D."/>
            <person name="O'Reilly M."/>
            <person name="Ogawa K."/>
            <person name="Ogiwara A."/>
            <person name="Oudega B."/>
            <person name="Park S.-H."/>
            <person name="Parro V."/>
            <person name="Pohl T.M."/>
            <person name="Portetelle D."/>
            <person name="Porwollik S."/>
            <person name="Prescott A.M."/>
            <person name="Presecan E."/>
            <person name="Pujic P."/>
            <person name="Purnelle B."/>
            <person name="Rapoport G."/>
            <person name="Rey M."/>
            <person name="Reynolds S."/>
            <person name="Rieger M."/>
            <person name="Rivolta C."/>
            <person name="Rocha E."/>
            <person name="Roche B."/>
            <person name="Rose M."/>
            <person name="Sadaie Y."/>
            <person name="Sato T."/>
            <person name="Scanlan E."/>
            <person name="Schleich S."/>
            <person name="Schroeter R."/>
            <person name="Scoffone F."/>
            <person name="Sekiguchi J."/>
            <person name="Sekowska A."/>
            <person name="Seror S.J."/>
            <person name="Serror P."/>
            <person name="Shin B.-S."/>
            <person name="Soldo B."/>
            <person name="Sorokin A."/>
            <person name="Tacconi E."/>
            <person name="Takagi T."/>
            <person name="Takahashi H."/>
            <person name="Takemaru K."/>
            <person name="Takeuchi M."/>
            <person name="Tamakoshi A."/>
            <person name="Tanaka T."/>
            <person name="Terpstra P."/>
            <person name="Tognoni A."/>
            <person name="Tosato V."/>
            <person name="Uchiyama S."/>
            <person name="Vandenbol M."/>
            <person name="Vannier F."/>
            <person name="Vassarotti A."/>
            <person name="Viari A."/>
            <person name="Wambutt R."/>
            <person name="Wedler E."/>
            <person name="Wedler H."/>
            <person name="Weitzenegger T."/>
            <person name="Winters P."/>
            <person name="Wipat A."/>
            <person name="Yamamoto H."/>
            <person name="Yamane K."/>
            <person name="Yasumoto K."/>
            <person name="Yata K."/>
            <person name="Yoshida K."/>
            <person name="Yoshikawa H.-F."/>
            <person name="Zumstein E."/>
            <person name="Yoshikawa H."/>
            <person name="Danchin A."/>
        </authorList>
    </citation>
    <scope>NUCLEOTIDE SEQUENCE [LARGE SCALE GENOMIC DNA]</scope>
    <source>
        <strain>168</strain>
    </source>
</reference>
<keyword id="KW-1003">Cell membrane</keyword>
<keyword id="KW-0472">Membrane</keyword>
<keyword id="KW-1185">Reference proteome</keyword>
<keyword id="KW-0812">Transmembrane</keyword>
<keyword id="KW-1133">Transmembrane helix</keyword>
<feature type="chain" id="PRO_0000103419" description="Uncharacterized membrane protein YceF">
    <location>
        <begin position="1"/>
        <end position="257"/>
    </location>
</feature>
<feature type="transmembrane region" description="Helical" evidence="1">
    <location>
        <begin position="23"/>
        <end position="43"/>
    </location>
</feature>
<feature type="transmembrane region" description="Helical" evidence="1">
    <location>
        <begin position="79"/>
        <end position="99"/>
    </location>
</feature>
<feature type="transmembrane region" description="Helical" evidence="1">
    <location>
        <begin position="131"/>
        <end position="151"/>
    </location>
</feature>
<feature type="transmembrane region" description="Helical" evidence="1">
    <location>
        <begin position="158"/>
        <end position="178"/>
    </location>
</feature>
<feature type="transmembrane region" description="Helical" evidence="1">
    <location>
        <begin position="199"/>
        <end position="219"/>
    </location>
</feature>
<feature type="transmembrane region" description="Helical" evidence="1">
    <location>
        <begin position="221"/>
        <end position="241"/>
    </location>
</feature>